<accession>Q4R3J5</accession>
<organism>
    <name type="scientific">Macaca fascicularis</name>
    <name type="common">Crab-eating macaque</name>
    <name type="synonym">Cynomolgus monkey</name>
    <dbReference type="NCBI Taxonomy" id="9541"/>
    <lineage>
        <taxon>Eukaryota</taxon>
        <taxon>Metazoa</taxon>
        <taxon>Chordata</taxon>
        <taxon>Craniata</taxon>
        <taxon>Vertebrata</taxon>
        <taxon>Euteleostomi</taxon>
        <taxon>Mammalia</taxon>
        <taxon>Eutheria</taxon>
        <taxon>Euarchontoglires</taxon>
        <taxon>Primates</taxon>
        <taxon>Haplorrhini</taxon>
        <taxon>Catarrhini</taxon>
        <taxon>Cercopithecidae</taxon>
        <taxon>Cercopithecinae</taxon>
        <taxon>Macaca</taxon>
    </lineage>
</organism>
<comment type="function">
    <text evidence="2">General transcription factor that plays a role in transcription initiation by RNA polymerase II (Pol II). Involved in the pre-initiation complex (PIC) formation and Pol II recruitment at promoter DNA. Together with the TATA box-bound TBP forms the core initiation complex and provides a bridge between TBP and the Pol II-TFIIF complex. Released from the PIC early following the onset of transcription during the initiation and elongation transition and reassociates with TBP during the next transcription cycle. Associates with chromatin to core promoter-specific regions. Binds to two distinct DNA core promoter consensus sequence elements in a TBP-independent manner; these IIB-recognition elements (BREs) are localized immediately upstream (BREu), 5'-[GC][GC][GA]CGCC-3', and downstream (BREd), 5'-[GA]T[TGA][TG][GT][TG][TG]-3', of the TATA box element. Modulates transcription start site selection. Also exhibits autoacetyltransferase activity that contributes to the activated transcription.</text>
</comment>
<comment type="catalytic activity">
    <reaction evidence="2">
        <text>L-lysyl-[protein] + acetyl-CoA = N(6)-acetyl-L-lysyl-[protein] + CoA + H(+)</text>
        <dbReference type="Rhea" id="RHEA:45948"/>
        <dbReference type="Rhea" id="RHEA-COMP:9752"/>
        <dbReference type="Rhea" id="RHEA-COMP:10731"/>
        <dbReference type="ChEBI" id="CHEBI:15378"/>
        <dbReference type="ChEBI" id="CHEBI:29969"/>
        <dbReference type="ChEBI" id="CHEBI:57287"/>
        <dbReference type="ChEBI" id="CHEBI:57288"/>
        <dbReference type="ChEBI" id="CHEBI:61930"/>
        <dbReference type="EC" id="2.3.1.48"/>
    </reaction>
</comment>
<comment type="subunit">
    <text evidence="1 2">Found in a ternary complex with TATA box-bound TBP. Part of a TFIID-containing RNA polymerase II pre-initiation complex (PIC) that is composed of TBP and at least GTF2A1, GTF2A2, GTF2E1, GTF2E2, GTF2F1, GTF2H2, GTF2H3, GTF2H4, GTF2H5, GTF2B, TCEA1, ERCC2, ERCC3, TAF1, TAF2, TAF3, TAF4, TAF5, TAF6, TAF7, TAF8, TAF9, TAF10, TAF11, TAF12 and TAF13. Associates with TFIID-TFIIA (DA complex) to form TFIID-TFIIA-TFIIB (DAB complex), which is then recognized by RNA polymerase II (Pol II). Found in a RNA polymerase II initiation complex. Interacts (via C-terminus) with TBP; this interaction with TATA box-bound TBP guides Pol II into the PIC. Interacts (via N-terminus) with Pol II. Interacts (via C-terminus) with SSU72; this interaction is inhibited by SYMPK. Interacts with NR2F1; this interaction is direct. Interacts with PGR. Interacts with ESR1. Interacts with GTF2F1 (via C-terminus and preferentially via acetylated form); this interaction prevents binding of GTF2B to GTF2F2. Interacts with GTF2F2 (via N-terminus); this interaction is inhibited in presence of GTF2F1. Interacts with the transcription elongation factor TCEA2. Interacts with HSF1 (via transactivation domain) (By similarity). Interacts with GPBP1 (By similarity).</text>
</comment>
<comment type="subcellular location">
    <subcellularLocation>
        <location evidence="2">Nucleus</location>
    </subcellularLocation>
    <subcellularLocation>
        <location evidence="2">Chromosome</location>
    </subcellularLocation>
    <text evidence="2">Non-acetylated form colocalizes with DNA in the G0/1, S and G2 phases of the cell cycle, but not during mitosis. Acetylated form colocalizes at transcriptionally silent mitotic chromatids during mitosis at metaphase, anaphase, and telophase phases of the cell cycle.</text>
</comment>
<comment type="domain">
    <text evidence="2">The TFIIB-type zinc-binding domain is necessary for the interaction and recruitment of RNA polymerase II to the core promoter, the formation of a fully competent pre-initiation complex (PIC) assembly and basal transcription initiation. The C-terminus is necessary and sufficient for interaction with the TATA box-bound TBP complex and for the formation of PIC.</text>
</comment>
<comment type="PTM">
    <text evidence="2">Acetylated. Autoacetylated; autoacetylation at Lys-238 stimulates transcription activation.</text>
</comment>
<comment type="similarity">
    <text evidence="4">Belongs to the TFIIB family.</text>
</comment>
<evidence type="ECO:0000250" key="1">
    <source>
        <dbReference type="UniProtKB" id="P62915"/>
    </source>
</evidence>
<evidence type="ECO:0000250" key="2">
    <source>
        <dbReference type="UniProtKB" id="Q00403"/>
    </source>
</evidence>
<evidence type="ECO:0000255" key="3">
    <source>
        <dbReference type="PROSITE-ProRule" id="PRU00469"/>
    </source>
</evidence>
<evidence type="ECO:0000305" key="4"/>
<name>TF2B_MACFA</name>
<dbReference type="EC" id="2.3.1.48" evidence="2"/>
<dbReference type="EMBL" id="AB179271">
    <property type="protein sequence ID" value="BAE02322.1"/>
    <property type="molecule type" value="mRNA"/>
</dbReference>
<dbReference type="RefSeq" id="XP_005542862.2">
    <property type="nucleotide sequence ID" value="XM_005542805.4"/>
</dbReference>
<dbReference type="SMR" id="Q4R3J5"/>
<dbReference type="STRING" id="9541.ENSMFAP00000009527"/>
<dbReference type="GeneID" id="101865381"/>
<dbReference type="KEGG" id="mcf:101865381"/>
<dbReference type="CTD" id="2959"/>
<dbReference type="VEuPathDB" id="HostDB:ENSMFAG00000000827"/>
<dbReference type="eggNOG" id="KOG1597">
    <property type="taxonomic scope" value="Eukaryota"/>
</dbReference>
<dbReference type="OMA" id="DHDQRMK"/>
<dbReference type="Proteomes" id="UP000233100">
    <property type="component" value="Chromosome 1"/>
</dbReference>
<dbReference type="GO" id="GO:0005694">
    <property type="term" value="C:chromosome"/>
    <property type="evidence" value="ECO:0000250"/>
    <property type="project" value="UniProtKB"/>
</dbReference>
<dbReference type="GO" id="GO:0005634">
    <property type="term" value="C:nucleus"/>
    <property type="evidence" value="ECO:0000250"/>
    <property type="project" value="UniProtKB"/>
</dbReference>
<dbReference type="GO" id="GO:0032993">
    <property type="term" value="C:protein-DNA complex"/>
    <property type="evidence" value="ECO:0000250"/>
    <property type="project" value="UniProtKB"/>
</dbReference>
<dbReference type="GO" id="GO:0097550">
    <property type="term" value="C:transcription preinitiation complex"/>
    <property type="evidence" value="ECO:0007669"/>
    <property type="project" value="TreeGrafter"/>
</dbReference>
<dbReference type="GO" id="GO:0016407">
    <property type="term" value="F:acetyltransferase activity"/>
    <property type="evidence" value="ECO:0000250"/>
    <property type="project" value="UniProtKB"/>
</dbReference>
<dbReference type="GO" id="GO:0004402">
    <property type="term" value="F:histone acetyltransferase activity"/>
    <property type="evidence" value="ECO:0007669"/>
    <property type="project" value="UniProtKB-EC"/>
</dbReference>
<dbReference type="GO" id="GO:1990841">
    <property type="term" value="F:promoter-specific chromatin binding"/>
    <property type="evidence" value="ECO:0000250"/>
    <property type="project" value="UniProtKB"/>
</dbReference>
<dbReference type="GO" id="GO:0000993">
    <property type="term" value="F:RNA polymerase II complex binding"/>
    <property type="evidence" value="ECO:0000250"/>
    <property type="project" value="UniProtKB"/>
</dbReference>
<dbReference type="GO" id="GO:0000979">
    <property type="term" value="F:RNA polymerase II core promoter sequence-specific DNA binding"/>
    <property type="evidence" value="ECO:0000250"/>
    <property type="project" value="UniProtKB"/>
</dbReference>
<dbReference type="GO" id="GO:0016251">
    <property type="term" value="F:RNA polymerase II general transcription initiation factor activity"/>
    <property type="evidence" value="ECO:0007669"/>
    <property type="project" value="TreeGrafter"/>
</dbReference>
<dbReference type="GO" id="GO:0017025">
    <property type="term" value="F:TBP-class protein binding"/>
    <property type="evidence" value="ECO:0007669"/>
    <property type="project" value="InterPro"/>
</dbReference>
<dbReference type="GO" id="GO:0008270">
    <property type="term" value="F:zinc ion binding"/>
    <property type="evidence" value="ECO:0000250"/>
    <property type="project" value="UniProtKB"/>
</dbReference>
<dbReference type="GO" id="GO:0006473">
    <property type="term" value="P:protein acetylation"/>
    <property type="evidence" value="ECO:0000250"/>
    <property type="project" value="UniProtKB"/>
</dbReference>
<dbReference type="GO" id="GO:1990114">
    <property type="term" value="P:RNA polymerase II core complex assembly"/>
    <property type="evidence" value="ECO:0000250"/>
    <property type="project" value="UniProtKB"/>
</dbReference>
<dbReference type="GO" id="GO:0051123">
    <property type="term" value="P:RNA polymerase II preinitiation complex assembly"/>
    <property type="evidence" value="ECO:0000250"/>
    <property type="project" value="UniProtKB"/>
</dbReference>
<dbReference type="GO" id="GO:0006366">
    <property type="term" value="P:transcription by RNA polymerase II"/>
    <property type="evidence" value="ECO:0000250"/>
    <property type="project" value="UniProtKB"/>
</dbReference>
<dbReference type="GO" id="GO:0006367">
    <property type="term" value="P:transcription initiation at RNA polymerase II promoter"/>
    <property type="evidence" value="ECO:0000250"/>
    <property type="project" value="UniProtKB"/>
</dbReference>
<dbReference type="GO" id="GO:0001174">
    <property type="term" value="P:transcriptional start site selection at RNA polymerase II promoter"/>
    <property type="evidence" value="ECO:0000250"/>
    <property type="project" value="UniProtKB"/>
</dbReference>
<dbReference type="GO" id="GO:0019083">
    <property type="term" value="P:viral transcription"/>
    <property type="evidence" value="ECO:0000250"/>
    <property type="project" value="UniProtKB"/>
</dbReference>
<dbReference type="CDD" id="cd20551">
    <property type="entry name" value="CYCLIN_TFIIB_rpt1"/>
    <property type="match status" value="1"/>
</dbReference>
<dbReference type="CDD" id="cd20552">
    <property type="entry name" value="CYCLIN_TFIIB_rpt2"/>
    <property type="match status" value="1"/>
</dbReference>
<dbReference type="FunFam" id="1.10.472.10:FF:000008">
    <property type="entry name" value="Transcription initiation factor IIB"/>
    <property type="match status" value="1"/>
</dbReference>
<dbReference type="FunFam" id="1.10.472.170:FF:000003">
    <property type="entry name" value="Transcription initiation factor IIB"/>
    <property type="match status" value="1"/>
</dbReference>
<dbReference type="FunFam" id="2.20.25.10:FF:000007">
    <property type="entry name" value="Transcription initiation factor IIB"/>
    <property type="match status" value="1"/>
</dbReference>
<dbReference type="FunFam" id="1.10.472.10:FF:000019">
    <property type="entry name" value="transcription initiation factor IIB"/>
    <property type="match status" value="1"/>
</dbReference>
<dbReference type="Gene3D" id="2.20.25.10">
    <property type="match status" value="1"/>
</dbReference>
<dbReference type="Gene3D" id="1.10.472.10">
    <property type="entry name" value="Cyclin-like"/>
    <property type="match status" value="2"/>
</dbReference>
<dbReference type="InterPro" id="IPR013763">
    <property type="entry name" value="Cyclin-like_dom"/>
</dbReference>
<dbReference type="InterPro" id="IPR036915">
    <property type="entry name" value="Cyclin-like_sf"/>
</dbReference>
<dbReference type="InterPro" id="IPR000812">
    <property type="entry name" value="TFIIB"/>
</dbReference>
<dbReference type="InterPro" id="IPR023486">
    <property type="entry name" value="TFIIB_CS"/>
</dbReference>
<dbReference type="InterPro" id="IPR013150">
    <property type="entry name" value="TFIIB_cyclin"/>
</dbReference>
<dbReference type="InterPro" id="IPR013137">
    <property type="entry name" value="Znf_TFIIB"/>
</dbReference>
<dbReference type="PANTHER" id="PTHR11618:SF77">
    <property type="entry name" value="TRANSCRIPTION INITIATION FACTOR IIB"/>
    <property type="match status" value="1"/>
</dbReference>
<dbReference type="PANTHER" id="PTHR11618">
    <property type="entry name" value="TRANSCRIPTION INITIATION FACTOR IIB-RELATED"/>
    <property type="match status" value="1"/>
</dbReference>
<dbReference type="Pfam" id="PF00382">
    <property type="entry name" value="TFIIB"/>
    <property type="match status" value="2"/>
</dbReference>
<dbReference type="Pfam" id="PF08271">
    <property type="entry name" value="Zn_Ribbon_TF"/>
    <property type="match status" value="1"/>
</dbReference>
<dbReference type="PRINTS" id="PR00685">
    <property type="entry name" value="TIFACTORIIB"/>
</dbReference>
<dbReference type="SMART" id="SM00385">
    <property type="entry name" value="CYCLIN"/>
    <property type="match status" value="2"/>
</dbReference>
<dbReference type="SUPFAM" id="SSF47954">
    <property type="entry name" value="Cyclin-like"/>
    <property type="match status" value="2"/>
</dbReference>
<dbReference type="SUPFAM" id="SSF57783">
    <property type="entry name" value="Zinc beta-ribbon"/>
    <property type="match status" value="1"/>
</dbReference>
<dbReference type="PROSITE" id="PS00782">
    <property type="entry name" value="TFIIB"/>
    <property type="match status" value="2"/>
</dbReference>
<dbReference type="PROSITE" id="PS51134">
    <property type="entry name" value="ZF_TFIIB"/>
    <property type="match status" value="1"/>
</dbReference>
<reference key="1">
    <citation type="submission" date="2005-06" db="EMBL/GenBank/DDBJ databases">
        <title>DNA sequences of macaque genes expressed in brain or testis and its evolutionary implications.</title>
        <authorList>
            <consortium name="International consortium for macaque cDNA sequencing and analysis"/>
        </authorList>
    </citation>
    <scope>NUCLEOTIDE SEQUENCE [LARGE SCALE MRNA]</scope>
    <source>
        <tissue>Testis</tissue>
    </source>
</reference>
<proteinExistence type="evidence at transcript level"/>
<protein>
    <recommendedName>
        <fullName evidence="2">Transcription initiation factor IIB</fullName>
        <ecNumber evidence="2">2.3.1.48</ecNumber>
    </recommendedName>
    <alternativeName>
        <fullName evidence="2">General transcription factor TFIIB</fullName>
    </alternativeName>
</protein>
<feature type="chain" id="PRO_0000328159" description="Transcription initiation factor IIB">
    <location>
        <begin position="1"/>
        <end position="316"/>
    </location>
</feature>
<feature type="repeat" description="1">
    <location>
        <begin position="124"/>
        <end position="200"/>
    </location>
</feature>
<feature type="repeat" description="2">
    <location>
        <begin position="218"/>
        <end position="294"/>
    </location>
</feature>
<feature type="zinc finger region" description="TFIIB-type" evidence="3">
    <location>
        <begin position="11"/>
        <end position="42"/>
    </location>
</feature>
<feature type="region of interest" description="Core promoter DNA-binding" evidence="2">
    <location>
        <begin position="189"/>
        <end position="193"/>
    </location>
</feature>
<feature type="region of interest" description="Necessary for TATA box-bound TBP complex formation" evidence="2">
    <location>
        <begin position="244"/>
        <end position="316"/>
    </location>
</feature>
<feature type="region of interest" description="Core promoter DNA-binding" evidence="2">
    <location>
        <begin position="249"/>
        <end position="252"/>
    </location>
</feature>
<feature type="region of interest" description="Core promoter DNA-binding" evidence="2">
    <location>
        <begin position="283"/>
        <end position="286"/>
    </location>
</feature>
<feature type="binding site" evidence="3">
    <location>
        <position position="15"/>
    </location>
    <ligand>
        <name>Zn(2+)</name>
        <dbReference type="ChEBI" id="CHEBI:29105"/>
    </ligand>
</feature>
<feature type="binding site" evidence="3">
    <location>
        <position position="18"/>
    </location>
    <ligand>
        <name>Zn(2+)</name>
        <dbReference type="ChEBI" id="CHEBI:29105"/>
    </ligand>
</feature>
<feature type="binding site" evidence="3">
    <location>
        <position position="34"/>
    </location>
    <ligand>
        <name>Zn(2+)</name>
        <dbReference type="ChEBI" id="CHEBI:29105"/>
    </ligand>
</feature>
<feature type="binding site" evidence="3">
    <location>
        <position position="37"/>
    </location>
    <ligand>
        <name>Zn(2+)</name>
        <dbReference type="ChEBI" id="CHEBI:29105"/>
    </ligand>
</feature>
<feature type="binding site" evidence="2">
    <location>
        <position position="152"/>
    </location>
    <ligand>
        <name>DNA</name>
        <dbReference type="ChEBI" id="CHEBI:16991"/>
    </ligand>
</feature>
<feature type="binding site" evidence="2">
    <location>
        <position position="154"/>
    </location>
    <ligand>
        <name>DNA</name>
        <dbReference type="ChEBI" id="CHEBI:16991"/>
    </ligand>
</feature>
<feature type="binding site" evidence="2">
    <location>
        <position position="189"/>
    </location>
    <ligand>
        <name>DNA</name>
        <dbReference type="ChEBI" id="CHEBI:16991"/>
    </ligand>
</feature>
<feature type="binding site" evidence="2">
    <location>
        <position position="196"/>
    </location>
    <ligand>
        <name>DNA</name>
        <dbReference type="ChEBI" id="CHEBI:16991"/>
    </ligand>
</feature>
<feature type="binding site" evidence="2">
    <location>
        <position position="248"/>
    </location>
    <ligand>
        <name>DNA</name>
        <dbReference type="ChEBI" id="CHEBI:16991"/>
    </ligand>
</feature>
<feature type="binding site" evidence="2">
    <location>
        <position position="272"/>
    </location>
    <ligand>
        <name>DNA</name>
        <dbReference type="ChEBI" id="CHEBI:16991"/>
    </ligand>
</feature>
<feature type="binding site" evidence="2">
    <location>
        <position position="281"/>
    </location>
    <ligand>
        <name>DNA</name>
        <dbReference type="ChEBI" id="CHEBI:16991"/>
    </ligand>
</feature>
<feature type="binding site" evidence="2">
    <location>
        <position position="284"/>
    </location>
    <ligand>
        <name>DNA</name>
        <dbReference type="ChEBI" id="CHEBI:16991"/>
    </ligand>
</feature>
<feature type="binding site" evidence="2">
    <location>
        <position position="286"/>
    </location>
    <ligand>
        <name>DNA</name>
        <dbReference type="ChEBI" id="CHEBI:16991"/>
    </ligand>
</feature>
<feature type="binding site" evidence="2">
    <location>
        <position position="290"/>
    </location>
    <ligand>
        <name>DNA</name>
        <dbReference type="ChEBI" id="CHEBI:16991"/>
    </ligand>
</feature>
<feature type="modified residue" description="Phosphoserine" evidence="2">
    <location>
        <position position="70"/>
    </location>
</feature>
<feature type="modified residue" description="Phosphoserine" evidence="2">
    <location>
        <position position="76"/>
    </location>
</feature>
<feature type="modified residue" description="Phosphoserine" evidence="2">
    <location>
        <position position="92"/>
    </location>
</feature>
<feature type="modified residue" description="N6-acetyllysine; by autocatalysis" evidence="2">
    <location>
        <position position="238"/>
    </location>
</feature>
<keyword id="KW-0007">Acetylation</keyword>
<keyword id="KW-0012">Acyltransferase</keyword>
<keyword id="KW-0158">Chromosome</keyword>
<keyword id="KW-0238">DNA-binding</keyword>
<keyword id="KW-0479">Metal-binding</keyword>
<keyword id="KW-0539">Nucleus</keyword>
<keyword id="KW-0597">Phosphoprotein</keyword>
<keyword id="KW-1185">Reference proteome</keyword>
<keyword id="KW-0677">Repeat</keyword>
<keyword id="KW-0804">Transcription</keyword>
<keyword id="KW-0805">Transcription regulation</keyword>
<keyword id="KW-0808">Transferase</keyword>
<keyword id="KW-0862">Zinc</keyword>
<keyword id="KW-0863">Zinc-finger</keyword>
<sequence length="316" mass="34833">MASTSRLDALPRVTCPNHPDAILVEDYRAGDMICPECGLVVGDRVIDVGSEWRTFSNDKATKDPSRVGDSQNPLLSDGDLSTMIGKGTGAASFDEFGNSKYQNRRTMSSSDRAMMNAFKEITTMADRINLPRNIVDRTNNLFKQVYEQKSLKGRANDAIASACLYIACRQEGVPRTFKEICAVSRISKKEIGRCFKLILKALETSVDLITTGDFMSRFCSNLCLPKQVQMAATHIARKAVELDLVPGRSPISVAAAAIYMASQASAEKRTQKEIGDIAGVADVTIRQSYRLIYPRAPDLFPTDFKFDTPVDKLPQL</sequence>
<gene>
    <name evidence="2" type="primary">GTF2B</name>
    <name type="ORF">QtsA-16571</name>
</gene>